<accession>Q5R110</accession>
<organism>
    <name type="scientific">Idiomarina loihiensis (strain ATCC BAA-735 / DSM 15497 / L2-TR)</name>
    <dbReference type="NCBI Taxonomy" id="283942"/>
    <lineage>
        <taxon>Bacteria</taxon>
        <taxon>Pseudomonadati</taxon>
        <taxon>Pseudomonadota</taxon>
        <taxon>Gammaproteobacteria</taxon>
        <taxon>Alteromonadales</taxon>
        <taxon>Idiomarinaceae</taxon>
        <taxon>Idiomarina</taxon>
    </lineage>
</organism>
<dbReference type="EC" id="2.7.8.7" evidence="1"/>
<dbReference type="EMBL" id="AE017340">
    <property type="protein sequence ID" value="AAV81646.1"/>
    <property type="molecule type" value="Genomic_DNA"/>
</dbReference>
<dbReference type="RefSeq" id="WP_011234057.1">
    <property type="nucleotide sequence ID" value="NC_006512.1"/>
</dbReference>
<dbReference type="SMR" id="Q5R110"/>
<dbReference type="STRING" id="283942.IL0806"/>
<dbReference type="GeneID" id="41335961"/>
<dbReference type="KEGG" id="ilo:IL0806"/>
<dbReference type="eggNOG" id="COG0736">
    <property type="taxonomic scope" value="Bacteria"/>
</dbReference>
<dbReference type="HOGENOM" id="CLU_089696_3_1_6"/>
<dbReference type="OrthoDB" id="517356at2"/>
<dbReference type="Proteomes" id="UP000001171">
    <property type="component" value="Chromosome"/>
</dbReference>
<dbReference type="GO" id="GO:0005737">
    <property type="term" value="C:cytoplasm"/>
    <property type="evidence" value="ECO:0007669"/>
    <property type="project" value="UniProtKB-SubCell"/>
</dbReference>
<dbReference type="GO" id="GO:0008897">
    <property type="term" value="F:holo-[acyl-carrier-protein] synthase activity"/>
    <property type="evidence" value="ECO:0007669"/>
    <property type="project" value="UniProtKB-UniRule"/>
</dbReference>
<dbReference type="GO" id="GO:0000287">
    <property type="term" value="F:magnesium ion binding"/>
    <property type="evidence" value="ECO:0007669"/>
    <property type="project" value="UniProtKB-UniRule"/>
</dbReference>
<dbReference type="GO" id="GO:0006633">
    <property type="term" value="P:fatty acid biosynthetic process"/>
    <property type="evidence" value="ECO:0007669"/>
    <property type="project" value="UniProtKB-UniRule"/>
</dbReference>
<dbReference type="FunFam" id="3.90.470.20:FF:000001">
    <property type="entry name" value="Holo-[acyl-carrier-protein] synthase"/>
    <property type="match status" value="1"/>
</dbReference>
<dbReference type="Gene3D" id="3.90.470.20">
    <property type="entry name" value="4'-phosphopantetheinyl transferase domain"/>
    <property type="match status" value="1"/>
</dbReference>
<dbReference type="HAMAP" id="MF_00101">
    <property type="entry name" value="AcpS"/>
    <property type="match status" value="1"/>
</dbReference>
<dbReference type="InterPro" id="IPR008278">
    <property type="entry name" value="4-PPantetheinyl_Trfase_dom"/>
</dbReference>
<dbReference type="InterPro" id="IPR037143">
    <property type="entry name" value="4-PPantetheinyl_Trfase_dom_sf"/>
</dbReference>
<dbReference type="InterPro" id="IPR002582">
    <property type="entry name" value="ACPS"/>
</dbReference>
<dbReference type="InterPro" id="IPR004568">
    <property type="entry name" value="Ppantetheine-prot_Trfase_dom"/>
</dbReference>
<dbReference type="NCBIfam" id="TIGR00516">
    <property type="entry name" value="acpS"/>
    <property type="match status" value="1"/>
</dbReference>
<dbReference type="NCBIfam" id="TIGR00556">
    <property type="entry name" value="pantethn_trn"/>
    <property type="match status" value="1"/>
</dbReference>
<dbReference type="Pfam" id="PF01648">
    <property type="entry name" value="ACPS"/>
    <property type="match status" value="1"/>
</dbReference>
<dbReference type="SUPFAM" id="SSF56214">
    <property type="entry name" value="4'-phosphopantetheinyl transferase"/>
    <property type="match status" value="1"/>
</dbReference>
<feature type="chain" id="PRO_0000175655" description="Holo-[acyl-carrier-protein] synthase">
    <location>
        <begin position="1"/>
        <end position="126"/>
    </location>
</feature>
<feature type="binding site" evidence="1">
    <location>
        <position position="9"/>
    </location>
    <ligand>
        <name>Mg(2+)</name>
        <dbReference type="ChEBI" id="CHEBI:18420"/>
    </ligand>
</feature>
<feature type="binding site" evidence="1">
    <location>
        <position position="57"/>
    </location>
    <ligand>
        <name>Mg(2+)</name>
        <dbReference type="ChEBI" id="CHEBI:18420"/>
    </ligand>
</feature>
<name>ACPS_IDILO</name>
<keyword id="KW-0963">Cytoplasm</keyword>
<keyword id="KW-0275">Fatty acid biosynthesis</keyword>
<keyword id="KW-0276">Fatty acid metabolism</keyword>
<keyword id="KW-0444">Lipid biosynthesis</keyword>
<keyword id="KW-0443">Lipid metabolism</keyword>
<keyword id="KW-0460">Magnesium</keyword>
<keyword id="KW-0479">Metal-binding</keyword>
<keyword id="KW-1185">Reference proteome</keyword>
<keyword id="KW-0808">Transferase</keyword>
<sequence>MAIWGLGTDIVEVARIEQSLARGNSLVKRVLTPKEQEEMTASVDEAAFLAKRFAAKEACSKAFGRGISAGLSFQHMQVVHNEYGKPEWHFTETAAQWVKEQGISGSHLSISDEKHYAVATVILETD</sequence>
<protein>
    <recommendedName>
        <fullName evidence="1">Holo-[acyl-carrier-protein] synthase</fullName>
        <shortName evidence="1">Holo-ACP synthase</shortName>
        <ecNumber evidence="1">2.7.8.7</ecNumber>
    </recommendedName>
    <alternativeName>
        <fullName evidence="1">4'-phosphopantetheinyl transferase AcpS</fullName>
    </alternativeName>
</protein>
<gene>
    <name evidence="1" type="primary">acpS</name>
    <name type="ordered locus">IL0806</name>
</gene>
<proteinExistence type="inferred from homology"/>
<reference key="1">
    <citation type="journal article" date="2004" name="Proc. Natl. Acad. Sci. U.S.A.">
        <title>Genome sequence of the deep-sea gamma-proteobacterium Idiomarina loihiensis reveals amino acid fermentation as a source of carbon and energy.</title>
        <authorList>
            <person name="Hou S."/>
            <person name="Saw J.H."/>
            <person name="Lee K.S."/>
            <person name="Freitas T.A."/>
            <person name="Belisle C."/>
            <person name="Kawarabayasi Y."/>
            <person name="Donachie S.P."/>
            <person name="Pikina A."/>
            <person name="Galperin M.Y."/>
            <person name="Koonin E.V."/>
            <person name="Makarova K.S."/>
            <person name="Omelchenko M.V."/>
            <person name="Sorokin A."/>
            <person name="Wolf Y.I."/>
            <person name="Li Q.X."/>
            <person name="Keum Y.S."/>
            <person name="Campbell S."/>
            <person name="Denery J."/>
            <person name="Aizawa S."/>
            <person name="Shibata S."/>
            <person name="Malahoff A."/>
            <person name="Alam M."/>
        </authorList>
    </citation>
    <scope>NUCLEOTIDE SEQUENCE [LARGE SCALE GENOMIC DNA]</scope>
    <source>
        <strain>ATCC BAA-735 / DSM 15497 / L2-TR</strain>
    </source>
</reference>
<evidence type="ECO:0000255" key="1">
    <source>
        <dbReference type="HAMAP-Rule" id="MF_00101"/>
    </source>
</evidence>
<comment type="function">
    <text evidence="1">Transfers the 4'-phosphopantetheine moiety from coenzyme A to a Ser of acyl-carrier-protein.</text>
</comment>
<comment type="catalytic activity">
    <reaction evidence="1">
        <text>apo-[ACP] + CoA = holo-[ACP] + adenosine 3',5'-bisphosphate + H(+)</text>
        <dbReference type="Rhea" id="RHEA:12068"/>
        <dbReference type="Rhea" id="RHEA-COMP:9685"/>
        <dbReference type="Rhea" id="RHEA-COMP:9690"/>
        <dbReference type="ChEBI" id="CHEBI:15378"/>
        <dbReference type="ChEBI" id="CHEBI:29999"/>
        <dbReference type="ChEBI" id="CHEBI:57287"/>
        <dbReference type="ChEBI" id="CHEBI:58343"/>
        <dbReference type="ChEBI" id="CHEBI:64479"/>
        <dbReference type="EC" id="2.7.8.7"/>
    </reaction>
</comment>
<comment type="cofactor">
    <cofactor evidence="1">
        <name>Mg(2+)</name>
        <dbReference type="ChEBI" id="CHEBI:18420"/>
    </cofactor>
</comment>
<comment type="subcellular location">
    <subcellularLocation>
        <location evidence="1">Cytoplasm</location>
    </subcellularLocation>
</comment>
<comment type="similarity">
    <text evidence="1">Belongs to the P-Pant transferase superfamily. AcpS family.</text>
</comment>